<organismHost>
    <name type="scientific">Acheta domesticus</name>
    <name type="common">House cricket</name>
    <dbReference type="NCBI Taxonomy" id="6997"/>
</organismHost>
<organismHost>
    <name type="scientific">Chilo suppressalis</name>
    <name type="common">Asiatic rice borer moth</name>
    <dbReference type="NCBI Taxonomy" id="168631"/>
</organismHost>
<organismHost>
    <name type="scientific">Gryllus bimaculatus</name>
    <name type="common">Two-spotted cricket</name>
    <dbReference type="NCBI Taxonomy" id="6999"/>
</organismHost>
<organismHost>
    <name type="scientific">Gryllus campestris</name>
    <dbReference type="NCBI Taxonomy" id="58607"/>
</organismHost>
<organismHost>
    <name type="scientific">Spodoptera frugiperda</name>
    <name type="common">Fall armyworm</name>
    <dbReference type="NCBI Taxonomy" id="7108"/>
</organismHost>
<proteinExistence type="predicted"/>
<accession>O55713</accession>
<sequence>MKIKKMKIKTINLKIEELINISKNTLFVKNNSSPFFTFDESTCLGYQTIHYSGTDNQKYYIFLLGIKLFRCNKYHLNVIFYNKISNTVERFEPFGNDNKSNSWNIKIFIIKQICNIFNLSKSPIYYDNIQSVLKHNSTDCVFLCLKHLKILLNDLL</sequence>
<dbReference type="EMBL" id="AF303741">
    <property type="protein sequence ID" value="AAB94424.1"/>
    <property type="molecule type" value="Genomic_DNA"/>
</dbReference>
<dbReference type="PIR" id="T03050">
    <property type="entry name" value="T03050"/>
</dbReference>
<dbReference type="RefSeq" id="NP_149545.1">
    <property type="nucleotide sequence ID" value="NC_003038.1"/>
</dbReference>
<dbReference type="SMR" id="O55713"/>
<dbReference type="KEGG" id="vg:1733108"/>
<dbReference type="Proteomes" id="UP000001359">
    <property type="component" value="Genome"/>
</dbReference>
<organism>
    <name type="scientific">Invertebrate iridescent virus 6</name>
    <name type="common">IIV-6</name>
    <name type="synonym">Chilo iridescent virus</name>
    <dbReference type="NCBI Taxonomy" id="176652"/>
    <lineage>
        <taxon>Viruses</taxon>
        <taxon>Varidnaviria</taxon>
        <taxon>Bamfordvirae</taxon>
        <taxon>Nucleocytoviricota</taxon>
        <taxon>Megaviricetes</taxon>
        <taxon>Pimascovirales</taxon>
        <taxon>Iridoviridae</taxon>
        <taxon>Betairidovirinae</taxon>
        <taxon>Iridovirus</taxon>
    </lineage>
</organism>
<protein>
    <recommendedName>
        <fullName>Uncharacterized protein 082L</fullName>
    </recommendedName>
</protein>
<keyword id="KW-1185">Reference proteome</keyword>
<feature type="chain" id="PRO_0000377981" description="Uncharacterized protein 082L">
    <location>
        <begin position="1"/>
        <end position="156"/>
    </location>
</feature>
<gene>
    <name type="ORF">IIV6-082L</name>
</gene>
<name>082L_IIV6</name>
<reference key="1">
    <citation type="journal article" date="2001" name="Virology">
        <title>Analysis of the first complete DNA sequence of an invertebrate iridovirus: coding strategy of the genome of Chilo iridescent virus.</title>
        <authorList>
            <person name="Jakob N.J."/>
            <person name="Mueller K."/>
            <person name="Bahr U."/>
            <person name="Darai G."/>
        </authorList>
    </citation>
    <scope>NUCLEOTIDE SEQUENCE [LARGE SCALE GENOMIC DNA]</scope>
</reference>
<reference key="2">
    <citation type="journal article" date="2007" name="Virol. J.">
        <title>Comparative genomic analysis of the family Iridoviridae: re-annotating and defining the core set of iridovirus genes.</title>
        <authorList>
            <person name="Eaton H.E."/>
            <person name="Metcalf J."/>
            <person name="Penny E."/>
            <person name="Tcherepanov V."/>
            <person name="Upton C."/>
            <person name="Brunetti C.R."/>
        </authorList>
    </citation>
    <scope>GENOME REANNOTATION</scope>
</reference>